<gene>
    <name evidence="2" type="primary">LCV3</name>
    <name evidence="4" type="ordered locus">At2g18460</name>
    <name evidence="5" type="ORF">T30D6.3</name>
</gene>
<organism evidence="6">
    <name type="scientific">Arabidopsis thaliana</name>
    <name type="common">Mouse-ear cress</name>
    <dbReference type="NCBI Taxonomy" id="3702"/>
    <lineage>
        <taxon>Eukaryota</taxon>
        <taxon>Viridiplantae</taxon>
        <taxon>Streptophyta</taxon>
        <taxon>Embryophyta</taxon>
        <taxon>Tracheophyta</taxon>
        <taxon>Spermatophyta</taxon>
        <taxon>Magnoliopsida</taxon>
        <taxon>eudicotyledons</taxon>
        <taxon>Gunneridae</taxon>
        <taxon>Pentapetalae</taxon>
        <taxon>rosids</taxon>
        <taxon>malvids</taxon>
        <taxon>Brassicales</taxon>
        <taxon>Brassicaceae</taxon>
        <taxon>Camelineae</taxon>
        <taxon>Arabidopsis</taxon>
    </lineage>
</organism>
<keyword id="KW-0472">Membrane</keyword>
<keyword id="KW-1185">Reference proteome</keyword>
<keyword id="KW-0812">Transmembrane</keyword>
<keyword id="KW-1133">Transmembrane helix</keyword>
<comment type="subcellular location">
    <subcellularLocation>
        <location evidence="1">Membrane</location>
        <topology evidence="1">Multi-pass membrane protein</topology>
    </subcellularLocation>
</comment>
<comment type="similarity">
    <text evidence="3">Belongs to the plant COV1 protein family.</text>
</comment>
<comment type="sequence caution" evidence="3">
    <conflict type="erroneous gene model prediction">
        <sequence resource="EMBL-CDS" id="AAD15492"/>
    </conflict>
</comment>
<reference key="1">
    <citation type="journal article" date="1999" name="Nature">
        <title>Sequence and analysis of chromosome 2 of the plant Arabidopsis thaliana.</title>
        <authorList>
            <person name="Lin X."/>
            <person name="Kaul S."/>
            <person name="Rounsley S.D."/>
            <person name="Shea T.P."/>
            <person name="Benito M.-I."/>
            <person name="Town C.D."/>
            <person name="Fujii C.Y."/>
            <person name="Mason T.M."/>
            <person name="Bowman C.L."/>
            <person name="Barnstead M.E."/>
            <person name="Feldblyum T.V."/>
            <person name="Buell C.R."/>
            <person name="Ketchum K.A."/>
            <person name="Lee J.J."/>
            <person name="Ronning C.M."/>
            <person name="Koo H.L."/>
            <person name="Moffat K.S."/>
            <person name="Cronin L.A."/>
            <person name="Shen M."/>
            <person name="Pai G."/>
            <person name="Van Aken S."/>
            <person name="Umayam L."/>
            <person name="Tallon L.J."/>
            <person name="Gill J.E."/>
            <person name="Adams M.D."/>
            <person name="Carrera A.J."/>
            <person name="Creasy T.H."/>
            <person name="Goodman H.M."/>
            <person name="Somerville C.R."/>
            <person name="Copenhaver G.P."/>
            <person name="Preuss D."/>
            <person name="Nierman W.C."/>
            <person name="White O."/>
            <person name="Eisen J.A."/>
            <person name="Salzberg S.L."/>
            <person name="Fraser C.M."/>
            <person name="Venter J.C."/>
        </authorList>
    </citation>
    <scope>NUCLEOTIDE SEQUENCE [LARGE SCALE GENOMIC DNA]</scope>
    <source>
        <strain>cv. Columbia</strain>
    </source>
</reference>
<reference key="2">
    <citation type="journal article" date="2017" name="Plant J.">
        <title>Araport11: a complete reannotation of the Arabidopsis thaliana reference genome.</title>
        <authorList>
            <person name="Cheng C.Y."/>
            <person name="Krishnakumar V."/>
            <person name="Chan A.P."/>
            <person name="Thibaud-Nissen F."/>
            <person name="Schobel S."/>
            <person name="Town C.D."/>
        </authorList>
    </citation>
    <scope>GENOME REANNOTATION</scope>
    <source>
        <strain>cv. Columbia</strain>
    </source>
</reference>
<reference key="3">
    <citation type="journal article" date="2003" name="Development">
        <title>Isolation of COV1, a gene involved in the regulation of vascular patterning in the stem of Arabidopsis.</title>
        <authorList>
            <person name="Parker G."/>
            <person name="Schofield R."/>
            <person name="Sundberg B."/>
            <person name="Turner S."/>
        </authorList>
    </citation>
    <scope>GENE FAMILY</scope>
    <scope>NOMENCLATURE</scope>
    <source>
        <strain>cv. Landsberg erecta</strain>
    </source>
</reference>
<proteinExistence type="evidence at transcript level"/>
<accession>F4IQJ6</accession>
<accession>Q9ZPX6</accession>
<protein>
    <recommendedName>
        <fullName evidence="2">Protein LIKE COV 3</fullName>
    </recommendedName>
</protein>
<evidence type="ECO:0000255" key="1"/>
<evidence type="ECO:0000303" key="2">
    <source>
    </source>
</evidence>
<evidence type="ECO:0000305" key="3"/>
<evidence type="ECO:0000312" key="4">
    <source>
        <dbReference type="Araport" id="AT2G18460"/>
    </source>
</evidence>
<evidence type="ECO:0000312" key="5">
    <source>
        <dbReference type="EMBL" id="AAD15492.1"/>
    </source>
</evidence>
<evidence type="ECO:0000312" key="6">
    <source>
        <dbReference type="Proteomes" id="UP000006548"/>
    </source>
</evidence>
<name>LCV3_ARATH</name>
<feature type="chain" id="PRO_0000431901" description="Protein LIKE COV 3">
    <location>
        <begin position="1"/>
        <end position="274"/>
    </location>
</feature>
<feature type="topological domain" description="Cytoplasmic" evidence="3">
    <location>
        <begin position="1"/>
        <end position="60"/>
    </location>
</feature>
<feature type="transmembrane region" description="Helical; Name=1" evidence="1">
    <location>
        <begin position="61"/>
        <end position="81"/>
    </location>
</feature>
<feature type="topological domain" description="Extracellular" evidence="3">
    <location>
        <begin position="82"/>
        <end position="93"/>
    </location>
</feature>
<feature type="transmembrane region" description="Helical; Name=2" evidence="1">
    <location>
        <begin position="94"/>
        <end position="114"/>
    </location>
</feature>
<feature type="topological domain" description="Cytoplasmic" evidence="3">
    <location>
        <begin position="115"/>
        <end position="274"/>
    </location>
</feature>
<sequence>METRERDLERLIPMHKSGASPRDVVLSVPPSPLASPIHVAGKEAIYKVIRSWASKKFMTGCVILLPIAVTFYFTWWFIHFVDGFFSPIYTHLGINMFGLGFVTSITFIFMVGVFMSSWLGASVLSIGEWFIKKMPLVSYIYSASKQISGAISPDQSSGAFKEVAIIRHPHMGEYAFGFITSTVILRGRAGGEELCCVYVPTNHLYLGDIFLISSKDIIRPNLSVREGIEIVISGGMSIPHMLTTLDSETIHRMLESFGILEFGDVCLSLVLAWT</sequence>
<dbReference type="EMBL" id="AC006439">
    <property type="protein sequence ID" value="AAD15492.1"/>
    <property type="status" value="ALT_SEQ"/>
    <property type="molecule type" value="Genomic_DNA"/>
</dbReference>
<dbReference type="EMBL" id="CP002685">
    <property type="protein sequence ID" value="AEC06770.1"/>
    <property type="molecule type" value="Genomic_DNA"/>
</dbReference>
<dbReference type="EMBL" id="DQ069818">
    <property type="status" value="NOT_ANNOTATED_CDS"/>
    <property type="molecule type" value="mRNA"/>
</dbReference>
<dbReference type="PIR" id="E84564">
    <property type="entry name" value="E84564"/>
</dbReference>
<dbReference type="RefSeq" id="NP_179436.3">
    <property type="nucleotide sequence ID" value="NM_127402.4"/>
</dbReference>
<dbReference type="PaxDb" id="3702-AT2G18460.1"/>
<dbReference type="ProteomicsDB" id="250772"/>
<dbReference type="EnsemblPlants" id="AT2G18460.1">
    <property type="protein sequence ID" value="AT2G18460.1"/>
    <property type="gene ID" value="AT2G18460"/>
</dbReference>
<dbReference type="GeneID" id="816360"/>
<dbReference type="Gramene" id="AT2G18460.1">
    <property type="protein sequence ID" value="AT2G18460.1"/>
    <property type="gene ID" value="AT2G18460"/>
</dbReference>
<dbReference type="KEGG" id="ath:AT2G18460"/>
<dbReference type="Araport" id="AT2G18460"/>
<dbReference type="TAIR" id="AT2G18460">
    <property type="gene designation" value="LCV3"/>
</dbReference>
<dbReference type="eggNOG" id="ENOG502QRSM">
    <property type="taxonomic scope" value="Eukaryota"/>
</dbReference>
<dbReference type="HOGENOM" id="CLU_068050_0_1_1"/>
<dbReference type="InParanoid" id="F4IQJ6"/>
<dbReference type="OMA" id="WRIGFLT"/>
<dbReference type="PRO" id="PR:F4IQJ6"/>
<dbReference type="Proteomes" id="UP000006548">
    <property type="component" value="Chromosome 2"/>
</dbReference>
<dbReference type="ExpressionAtlas" id="F4IQJ6">
    <property type="expression patterns" value="baseline and differential"/>
</dbReference>
<dbReference type="GO" id="GO:0016020">
    <property type="term" value="C:membrane"/>
    <property type="evidence" value="ECO:0007669"/>
    <property type="project" value="UniProtKB-SubCell"/>
</dbReference>
<dbReference type="InterPro" id="IPR007462">
    <property type="entry name" value="COV1-like"/>
</dbReference>
<dbReference type="PANTHER" id="PTHR31876">
    <property type="entry name" value="COV-LIKE PROTEIN 1"/>
    <property type="match status" value="1"/>
</dbReference>
<dbReference type="PANTHER" id="PTHR31876:SF23">
    <property type="entry name" value="PROTEIN LIKE COV 3"/>
    <property type="match status" value="1"/>
</dbReference>
<dbReference type="Pfam" id="PF04367">
    <property type="entry name" value="DUF502"/>
    <property type="match status" value="1"/>
</dbReference>